<keyword id="KW-0009">Actin-binding</keyword>
<keyword id="KW-0106">Calcium</keyword>
<keyword id="KW-1003">Cell membrane</keyword>
<keyword id="KW-0175">Coiled coil</keyword>
<keyword id="KW-0963">Cytoplasm</keyword>
<keyword id="KW-0206">Cytoskeleton</keyword>
<keyword id="KW-0254">Endocytosis</keyword>
<keyword id="KW-0967">Endosome</keyword>
<keyword id="KW-0472">Membrane</keyword>
<keyword id="KW-0479">Metal-binding</keyword>
<keyword id="KW-0677">Repeat</keyword>
<feature type="chain" id="PRO_0000349437" description="Actin cytoskeleton-regulatory complex protein end3">
    <location>
        <begin position="1"/>
        <end position="404"/>
    </location>
</feature>
<feature type="domain" description="EH 1" evidence="3">
    <location>
        <begin position="10"/>
        <end position="100"/>
    </location>
</feature>
<feature type="domain" description="EF-hand" evidence="4">
    <location>
        <begin position="42"/>
        <end position="77"/>
    </location>
</feature>
<feature type="domain" description="EH 2" evidence="3">
    <location>
        <begin position="139"/>
        <end position="227"/>
    </location>
</feature>
<feature type="region of interest" description="Disordered" evidence="5">
    <location>
        <begin position="306"/>
        <end position="327"/>
    </location>
</feature>
<feature type="coiled-coil region" evidence="2">
    <location>
        <begin position="281"/>
        <end position="404"/>
    </location>
</feature>
<feature type="compositionally biased region" description="Basic and acidic residues" evidence="5">
    <location>
        <begin position="313"/>
        <end position="324"/>
    </location>
</feature>
<feature type="binding site" evidence="4">
    <location>
        <position position="55"/>
    </location>
    <ligand>
        <name>Ca(2+)</name>
        <dbReference type="ChEBI" id="CHEBI:29108"/>
    </ligand>
</feature>
<feature type="binding site" evidence="4">
    <location>
        <position position="57"/>
    </location>
    <ligand>
        <name>Ca(2+)</name>
        <dbReference type="ChEBI" id="CHEBI:29108"/>
    </ligand>
</feature>
<feature type="binding site" evidence="4">
    <location>
        <position position="59"/>
    </location>
    <ligand>
        <name>Ca(2+)</name>
        <dbReference type="ChEBI" id="CHEBI:29108"/>
    </ligand>
</feature>
<feature type="binding site" evidence="4">
    <location>
        <position position="61"/>
    </location>
    <ligand>
        <name>Ca(2+)</name>
        <dbReference type="ChEBI" id="CHEBI:29108"/>
    </ligand>
</feature>
<feature type="binding site" evidence="4">
    <location>
        <position position="66"/>
    </location>
    <ligand>
        <name>Ca(2+)</name>
        <dbReference type="ChEBI" id="CHEBI:29108"/>
    </ligand>
</feature>
<organism>
    <name type="scientific">Aspergillus fumigatus (strain CBS 144.89 / FGSC A1163 / CEA10)</name>
    <name type="common">Neosartorya fumigata</name>
    <dbReference type="NCBI Taxonomy" id="451804"/>
    <lineage>
        <taxon>Eukaryota</taxon>
        <taxon>Fungi</taxon>
        <taxon>Dikarya</taxon>
        <taxon>Ascomycota</taxon>
        <taxon>Pezizomycotina</taxon>
        <taxon>Eurotiomycetes</taxon>
        <taxon>Eurotiomycetidae</taxon>
        <taxon>Eurotiales</taxon>
        <taxon>Aspergillaceae</taxon>
        <taxon>Aspergillus</taxon>
        <taxon>Aspergillus subgen. Fumigati</taxon>
    </lineage>
</organism>
<proteinExistence type="inferred from homology"/>
<dbReference type="EMBL" id="DS499594">
    <property type="protein sequence ID" value="EDP56539.1"/>
    <property type="molecule type" value="Genomic_DNA"/>
</dbReference>
<dbReference type="EnsemblFungi" id="EDP56539">
    <property type="protein sequence ID" value="EDP56539"/>
    <property type="gene ID" value="AFUB_012500"/>
</dbReference>
<dbReference type="VEuPathDB" id="FungiDB:AFUB_012500"/>
<dbReference type="HOGENOM" id="CLU_040829_0_0_1"/>
<dbReference type="OrthoDB" id="55224at5052"/>
<dbReference type="PhylomeDB" id="B0XR88"/>
<dbReference type="Proteomes" id="UP000001699">
    <property type="component" value="Unassembled WGS sequence"/>
</dbReference>
<dbReference type="GO" id="GO:0030479">
    <property type="term" value="C:actin cortical patch"/>
    <property type="evidence" value="ECO:0007669"/>
    <property type="project" value="UniProtKB-SubCell"/>
</dbReference>
<dbReference type="GO" id="GO:0010008">
    <property type="term" value="C:endosome membrane"/>
    <property type="evidence" value="ECO:0007669"/>
    <property type="project" value="UniProtKB-SubCell"/>
</dbReference>
<dbReference type="GO" id="GO:0005886">
    <property type="term" value="C:plasma membrane"/>
    <property type="evidence" value="ECO:0007669"/>
    <property type="project" value="UniProtKB-SubCell"/>
</dbReference>
<dbReference type="GO" id="GO:0003779">
    <property type="term" value="F:actin binding"/>
    <property type="evidence" value="ECO:0007669"/>
    <property type="project" value="UniProtKB-KW"/>
</dbReference>
<dbReference type="GO" id="GO:0005509">
    <property type="term" value="F:calcium ion binding"/>
    <property type="evidence" value="ECO:0007669"/>
    <property type="project" value="InterPro"/>
</dbReference>
<dbReference type="GO" id="GO:0007015">
    <property type="term" value="P:actin filament organization"/>
    <property type="evidence" value="ECO:0007669"/>
    <property type="project" value="InterPro"/>
</dbReference>
<dbReference type="GO" id="GO:0006897">
    <property type="term" value="P:endocytosis"/>
    <property type="evidence" value="ECO:0007669"/>
    <property type="project" value="UniProtKB-KW"/>
</dbReference>
<dbReference type="GO" id="GO:0016197">
    <property type="term" value="P:endosomal transport"/>
    <property type="evidence" value="ECO:0007669"/>
    <property type="project" value="TreeGrafter"/>
</dbReference>
<dbReference type="CDD" id="cd00052">
    <property type="entry name" value="EH"/>
    <property type="match status" value="1"/>
</dbReference>
<dbReference type="FunFam" id="1.10.238.10:FF:000339">
    <property type="entry name" value="Actin cytoskeleton-regulatory complex protein END3"/>
    <property type="match status" value="1"/>
</dbReference>
<dbReference type="FunFam" id="1.10.238.10:FF:000323">
    <property type="entry name" value="Actin cytoskeleton-regulatory complex protein end3"/>
    <property type="match status" value="1"/>
</dbReference>
<dbReference type="Gene3D" id="1.10.238.10">
    <property type="entry name" value="EF-hand"/>
    <property type="match status" value="2"/>
</dbReference>
<dbReference type="InterPro" id="IPR011992">
    <property type="entry name" value="EF-hand-dom_pair"/>
</dbReference>
<dbReference type="InterPro" id="IPR018247">
    <property type="entry name" value="EF_Hand_1_Ca_BS"/>
</dbReference>
<dbReference type="InterPro" id="IPR002048">
    <property type="entry name" value="EF_hand_dom"/>
</dbReference>
<dbReference type="InterPro" id="IPR000261">
    <property type="entry name" value="EH_dom"/>
</dbReference>
<dbReference type="InterPro" id="IPR025604">
    <property type="entry name" value="End3"/>
</dbReference>
<dbReference type="PANTHER" id="PTHR11216">
    <property type="entry name" value="EH DOMAIN"/>
    <property type="match status" value="1"/>
</dbReference>
<dbReference type="Pfam" id="PF12763">
    <property type="entry name" value="EH"/>
    <property type="match status" value="1"/>
</dbReference>
<dbReference type="Pfam" id="PF12761">
    <property type="entry name" value="End3"/>
    <property type="match status" value="1"/>
</dbReference>
<dbReference type="SMART" id="SM00054">
    <property type="entry name" value="EFh"/>
    <property type="match status" value="1"/>
</dbReference>
<dbReference type="SMART" id="SM00027">
    <property type="entry name" value="EH"/>
    <property type="match status" value="2"/>
</dbReference>
<dbReference type="SUPFAM" id="SSF47473">
    <property type="entry name" value="EF-hand"/>
    <property type="match status" value="2"/>
</dbReference>
<dbReference type="PROSITE" id="PS00018">
    <property type="entry name" value="EF_HAND_1"/>
    <property type="match status" value="1"/>
</dbReference>
<dbReference type="PROSITE" id="PS50222">
    <property type="entry name" value="EF_HAND_2"/>
    <property type="match status" value="1"/>
</dbReference>
<dbReference type="PROSITE" id="PS50031">
    <property type="entry name" value="EH"/>
    <property type="match status" value="2"/>
</dbReference>
<sequence length="404" mass="46489">MSNKKIEQWEIERYWEIFSSLANGHPRLNSSQAASVLRNSRLSDDQLEKVWDLADVDSDGELDFEEFCVAMRLVFDLVNGELQAVPRVLPDWLIPETKAHLVQAGRALSDRPEQFERIEDEDDTPGLKDGFDWYMKPSDKSKYEEIYSANRNHRGEITFESLQALYDSLDVPDTDIRSAWNLVNPSASPAINKDATLAFLHILNYRHEGFRIPRTIPASLRASFENNKIDYQIDNARPAQRWGADGDTETPTGRKAKFGDTYLSRLGVGGKGSYTPKGTDFSDTIQDEEWEKVRLRRELSELQAKLEAANKASESRRDRPRNDGRPNWTLIKKEALQLLEYKERELRELREGTGRAKAGQDLERLREDIRTVGEQVEGLKSHLAQRKEVLADLRSQIEEERARR</sequence>
<reference key="1">
    <citation type="journal article" date="2008" name="PLoS Genet.">
        <title>Genomic islands in the pathogenic filamentous fungus Aspergillus fumigatus.</title>
        <authorList>
            <person name="Fedorova N.D."/>
            <person name="Khaldi N."/>
            <person name="Joardar V.S."/>
            <person name="Maiti R."/>
            <person name="Amedeo P."/>
            <person name="Anderson M.J."/>
            <person name="Crabtree J."/>
            <person name="Silva J.C."/>
            <person name="Badger J.H."/>
            <person name="Albarraq A."/>
            <person name="Angiuoli S."/>
            <person name="Bussey H."/>
            <person name="Bowyer P."/>
            <person name="Cotty P.J."/>
            <person name="Dyer P.S."/>
            <person name="Egan A."/>
            <person name="Galens K."/>
            <person name="Fraser-Liggett C.M."/>
            <person name="Haas B.J."/>
            <person name="Inman J.M."/>
            <person name="Kent R."/>
            <person name="Lemieux S."/>
            <person name="Malavazi I."/>
            <person name="Orvis J."/>
            <person name="Roemer T."/>
            <person name="Ronning C.M."/>
            <person name="Sundaram J.P."/>
            <person name="Sutton G."/>
            <person name="Turner G."/>
            <person name="Venter J.C."/>
            <person name="White O.R."/>
            <person name="Whitty B.R."/>
            <person name="Youngman P."/>
            <person name="Wolfe K.H."/>
            <person name="Goldman G.H."/>
            <person name="Wortman J.R."/>
            <person name="Jiang B."/>
            <person name="Denning D.W."/>
            <person name="Nierman W.C."/>
        </authorList>
    </citation>
    <scope>NUCLEOTIDE SEQUENCE [LARGE SCALE GENOMIC DNA]</scope>
    <source>
        <strain>CBS 144.89 / FGSC A1163 / CEA10</strain>
    </source>
</reference>
<accession>B0XR88</accession>
<comment type="function">
    <text evidence="1">Component of the PAN1 actin cytoskeleton-regulatory complex required for the internalization of endosomes during actin-coupled endocytosis. The complex links the site of endocytosis to the cell membrane-associated actin cytoskeleton. Mediates uptake of external molecules and vacuolar degradation of plasma membrane proteins. Plays a role in the proper organization of the cell membrane-associated actin cytoskeleton and promotes its destabilization (By similarity).</text>
</comment>
<comment type="subunit">
    <text evidence="1">Component of the PAN1 actin cytoskeleton-regulatory complex.</text>
</comment>
<comment type="subcellular location">
    <subcellularLocation>
        <location evidence="1">Cell membrane</location>
        <topology evidence="1">Peripheral membrane protein</topology>
        <orientation evidence="1">Cytoplasmic side</orientation>
    </subcellularLocation>
    <subcellularLocation>
        <location evidence="1">Endosome membrane</location>
        <topology evidence="1">Peripheral membrane protein</topology>
        <orientation evidence="1">Cytoplasmic side</orientation>
    </subcellularLocation>
    <subcellularLocation>
        <location evidence="1">Cytoplasm</location>
        <location evidence="1">Cytoskeleton</location>
        <location evidence="1">Actin patch</location>
    </subcellularLocation>
    <text evidence="1">Cytoplasmic and cortical actin patches.</text>
</comment>
<comment type="similarity">
    <text evidence="6">Belongs to the END3 family.</text>
</comment>
<evidence type="ECO:0000250" key="1"/>
<evidence type="ECO:0000255" key="2"/>
<evidence type="ECO:0000255" key="3">
    <source>
        <dbReference type="PROSITE-ProRule" id="PRU00077"/>
    </source>
</evidence>
<evidence type="ECO:0000255" key="4">
    <source>
        <dbReference type="PROSITE-ProRule" id="PRU00448"/>
    </source>
</evidence>
<evidence type="ECO:0000256" key="5">
    <source>
        <dbReference type="SAM" id="MobiDB-lite"/>
    </source>
</evidence>
<evidence type="ECO:0000305" key="6"/>
<gene>
    <name type="primary">end3</name>
    <name type="synonym">sagA</name>
    <name type="ORF">AFUB_012500</name>
</gene>
<name>END3_ASPFC</name>
<protein>
    <recommendedName>
        <fullName>Actin cytoskeleton-regulatory complex protein end3</fullName>
    </recommendedName>
    <alternativeName>
        <fullName>Cytoskeletal adapter protein sagA</fullName>
    </alternativeName>
    <alternativeName>
        <fullName>Endocytosis protein 3</fullName>
    </alternativeName>
</protein>